<accession>Q733L9</accession>
<name>SSPP_BACC1</name>
<organism>
    <name type="scientific">Bacillus cereus (strain ATCC 10987 / NRS 248)</name>
    <dbReference type="NCBI Taxonomy" id="222523"/>
    <lineage>
        <taxon>Bacteria</taxon>
        <taxon>Bacillati</taxon>
        <taxon>Bacillota</taxon>
        <taxon>Bacilli</taxon>
        <taxon>Bacillales</taxon>
        <taxon>Bacillaceae</taxon>
        <taxon>Bacillus</taxon>
        <taxon>Bacillus cereus group</taxon>
    </lineage>
</organism>
<proteinExistence type="inferred from homology"/>
<gene>
    <name evidence="1" type="primary">sspP</name>
    <name type="synonym">cotL</name>
    <name type="ordered locus">BCE_3639</name>
</gene>
<reference key="1">
    <citation type="journal article" date="2004" name="Nucleic Acids Res.">
        <title>The genome sequence of Bacillus cereus ATCC 10987 reveals metabolic adaptations and a large plasmid related to Bacillus anthracis pXO1.</title>
        <authorList>
            <person name="Rasko D.A."/>
            <person name="Ravel J."/>
            <person name="Oekstad O.A."/>
            <person name="Helgason E."/>
            <person name="Cer R.Z."/>
            <person name="Jiang L."/>
            <person name="Shores K.A."/>
            <person name="Fouts D.E."/>
            <person name="Tourasse N.J."/>
            <person name="Angiuoli S.V."/>
            <person name="Kolonay J.F."/>
            <person name="Nelson W.C."/>
            <person name="Kolstoe A.-B."/>
            <person name="Fraser C.M."/>
            <person name="Read T.D."/>
        </authorList>
    </citation>
    <scope>NUCLEOTIDE SEQUENCE [LARGE SCALE GENOMIC DNA]</scope>
    <source>
        <strain>ATCC 10987 / NRS 248</strain>
    </source>
</reference>
<sequence>MSQTMSKNNREAKEKKGQPEPLSGSHKVKNRNHSRQKHHAHHDM</sequence>
<evidence type="ECO:0000255" key="1">
    <source>
        <dbReference type="HAMAP-Rule" id="MF_00666"/>
    </source>
</evidence>
<evidence type="ECO:0000256" key="2">
    <source>
        <dbReference type="SAM" id="MobiDB-lite"/>
    </source>
</evidence>
<evidence type="ECO:0000305" key="3"/>
<comment type="subcellular location">
    <subcellularLocation>
        <location evidence="1">Spore core</location>
    </subcellularLocation>
</comment>
<comment type="induction">
    <text evidence="1">Expressed only in the forespore compartment of sporulating cells.</text>
</comment>
<comment type="similarity">
    <text evidence="1">Belongs to the SspP family.</text>
</comment>
<comment type="sequence caution" evidence="3">
    <conflict type="erroneous initiation">
        <sequence resource="EMBL-CDS" id="AAS42544"/>
    </conflict>
</comment>
<feature type="chain" id="PRO_0000217210" description="Small, acid-soluble spore protein P">
    <location>
        <begin position="1"/>
        <end position="44"/>
    </location>
</feature>
<feature type="region of interest" description="Disordered" evidence="2">
    <location>
        <begin position="1"/>
        <end position="44"/>
    </location>
</feature>
<feature type="compositionally biased region" description="Basic and acidic residues" evidence="2">
    <location>
        <begin position="8"/>
        <end position="18"/>
    </location>
</feature>
<feature type="compositionally biased region" description="Basic residues" evidence="2">
    <location>
        <begin position="26"/>
        <end position="44"/>
    </location>
</feature>
<dbReference type="EMBL" id="AE017194">
    <property type="protein sequence ID" value="AAS42544.1"/>
    <property type="status" value="ALT_INIT"/>
    <property type="molecule type" value="Genomic_DNA"/>
</dbReference>
<dbReference type="KEGG" id="bca:BCE_3639"/>
<dbReference type="HOGENOM" id="CLU_210130_0_0_9"/>
<dbReference type="Proteomes" id="UP000002527">
    <property type="component" value="Chromosome"/>
</dbReference>
<dbReference type="GO" id="GO:0030436">
    <property type="term" value="P:asexual sporulation"/>
    <property type="evidence" value="ECO:0007669"/>
    <property type="project" value="UniProtKB-UniRule"/>
</dbReference>
<dbReference type="GO" id="GO:0030435">
    <property type="term" value="P:sporulation resulting in formation of a cellular spore"/>
    <property type="evidence" value="ECO:0007669"/>
    <property type="project" value="UniProtKB-KW"/>
</dbReference>
<dbReference type="HAMAP" id="MF_00666">
    <property type="entry name" value="SspP"/>
    <property type="match status" value="1"/>
</dbReference>
<dbReference type="InterPro" id="IPR012614">
    <property type="entry name" value="SASP_SspP"/>
</dbReference>
<dbReference type="NCBIfam" id="NF006905">
    <property type="entry name" value="PRK09399.1"/>
    <property type="match status" value="1"/>
</dbReference>
<dbReference type="Pfam" id="PF08179">
    <property type="entry name" value="SspP"/>
    <property type="match status" value="1"/>
</dbReference>
<keyword id="KW-0749">Sporulation</keyword>
<protein>
    <recommendedName>
        <fullName evidence="1">Small, acid-soluble spore protein P</fullName>
        <shortName evidence="1">SASP P</shortName>
    </recommendedName>
</protein>